<name>NSMF_MOUSE</name>
<comment type="function">
    <text evidence="4">Couples NMDA-sensitive glutamate receptor signaling to the nucleus and triggers long-lasting changes in the cytoarchitecture of dendrites and spine synapse processes. Part of the cAMP response element-binding protein (CREB) shut-off signaling pathway. Stimulates outgrowth of olfactory axons and migration of gonadotropin-releasing hormone (GnRH) and luteinizing-hormone-releasing hormone (LHRH) neuronal cells.</text>
</comment>
<comment type="subunit">
    <text evidence="1">Interacts with KPNA1; the interaction occurs in a calcium-independent manner after synaptic NMDA receptor stimulation and is required for nuclear import of NSMF but is competed by CABP1. Interacts (via the central NLS-containing motif region) with CABP1 (via EF-hands 1 and 2); the interaction occurs in a calcium-dependent manner after synaptic NMDA receptor stimulation and prevents the nuclear import of NSMF. Cannot be competed by calmodulin (By similarity).</text>
</comment>
<comment type="interaction">
    <interactant intactId="EBI-15688721">
        <id>Q99NF2-1</id>
    </interactant>
    <interactant intactId="EBI-15688755">
        <id>O88751-1</id>
        <label>Cabp1</label>
    </interactant>
    <organismsDiffer>true</organismsDiffer>
    <experiments>2</experiments>
</comment>
<comment type="subcellular location">
    <subcellularLocation>
        <location>Nucleus</location>
    </subcellularLocation>
    <subcellularLocation>
        <location evidence="1">Nucleus envelope</location>
    </subcellularLocation>
    <subcellularLocation>
        <location evidence="1">Nucleus membrane</location>
    </subcellularLocation>
    <subcellularLocation>
        <location evidence="1">Nucleus matrix</location>
    </subcellularLocation>
    <subcellularLocation>
        <location>Cytoplasm</location>
    </subcellularLocation>
    <subcellularLocation>
        <location evidence="1">Cytoplasm</location>
        <location evidence="1">Cell cortex</location>
    </subcellularLocation>
    <subcellularLocation>
        <location evidence="1">Cytoplasm</location>
        <location evidence="1">Cytoskeleton</location>
    </subcellularLocation>
    <subcellularLocation>
        <location>Cell membrane</location>
        <topology>Peripheral membrane protein</topology>
    </subcellularLocation>
    <subcellularLocation>
        <location evidence="1">Cell projection</location>
        <location evidence="1">Dendrite</location>
    </subcellularLocation>
    <subcellularLocation>
        <location evidence="1">Synapse</location>
    </subcellularLocation>
    <subcellularLocation>
        <location evidence="1">Synapse</location>
        <location evidence="1">Synaptosome</location>
    </subcellularLocation>
    <subcellularLocation>
        <location evidence="1">Postsynaptic density</location>
    </subcellularLocation>
    <subcellularLocation>
        <location evidence="1">Membrane</location>
    </subcellularLocation>
    <text evidence="1">Found on the outside of the luteinizing-hormone-releasing hormone (LHRH) cell membrane and axons projecting from the olfactory pit and epithelium. Associates with transcriptionally active chromatin regions. Detected at the nuclear membranes of CA1 neurons. Cortical cytoskeleton. Localized in proximal apical dendrites. Colocalizes with CABP1 in dendrites and dendritic spines. Myristoylation is a prerequisite for extranuclear localization. Translocates from dendrites to the nucleus during NMDA receptor-dependent long-term potentiation (LTP) induction of synaptic transmission at Schaffer collateral/CA1 synapses of hippocampal primary neurons and in an importin-dependent manner (By similarity).</text>
</comment>
<comment type="alternative products">
    <event type="alternative splicing"/>
    <isoform>
        <id>Q99NF2-1</id>
        <name>1</name>
        <sequence type="displayed"/>
    </isoform>
    <isoform>
        <id>Q99NF2-2</id>
        <name>2</name>
        <sequence type="described" ref="VSP_014767"/>
    </isoform>
    <isoform>
        <id>Q99NF2-3</id>
        <name>3</name>
        <sequence type="described" ref="VSP_014768"/>
    </isoform>
    <isoform>
        <id>Q99NF2-4</id>
        <name>4</name>
        <sequence type="described" ref="VSP_014764 VSP_014767 VSP_014769"/>
    </isoform>
    <isoform>
        <id>Q99NF2-5</id>
        <name>5</name>
        <sequence type="described" ref="VSP_014765 VSP_014766"/>
    </isoform>
</comment>
<comment type="tissue specificity">
    <text evidence="4 5 6">Preferentially expressed in immature migratory, in comparison to postmigrating, gonadotropin-releasing hormone (GnRH) neuronal cell lines (at protein level). Expressed in adult brain and liver. In the brain, expressed in the primary pituitary gland, cortex, hippocampus, olfactory bulb and thalamus.</text>
</comment>
<comment type="developmental stage">
    <text evidence="4">At 14.5 dpc embryo found at high levels within the forebrain, olfactory epithelium and olfactory pit. At 12.5 dpc embryo detected on olfactory axons including olfactory pathway on which the LHRH neurons move. From 11.5 dpc to 17.5 dpc embryos expressed in LHRH (luteinizing hormone-releasing hormone) neurons as they migrate from the olfactory pit into the developing forebrain.</text>
</comment>
<comment type="induction">
    <text evidence="6">Up-regulated by gonadotropin releasing hormone (GnRH).</text>
</comment>
<comment type="PTM">
    <text evidence="1">Proteolytically processed after NMDA receptor activation. Cleaved in a calcium-dependent and calpain-sensitive manner. Calpain cleavage is essential for the translocation process from dendrites to the nucleus (By similarity).</text>
</comment>
<comment type="miscellaneous">
    <text evidence="1">Transport from dendrites to the nucleus is induced by NMDA receptor activation and results in a rapid stripping of synaptic contacts and a reduction of dendritic complexity (By similarity). KIF5C associates to its 3'-UTR mRNA in granules along dendritic shafts, suggesting that this protein may regulate its dendritic trafficking and local translation at postsynaptic sites.</text>
</comment>
<comment type="similarity">
    <text evidence="10">Belongs to the NSMF family.</text>
</comment>
<gene>
    <name type="primary">Nsmf</name>
    <name type="synonym">Jac</name>
    <name type="synonym">Nelf</name>
</gene>
<organism>
    <name type="scientific">Mus musculus</name>
    <name type="common">Mouse</name>
    <dbReference type="NCBI Taxonomy" id="10090"/>
    <lineage>
        <taxon>Eukaryota</taxon>
        <taxon>Metazoa</taxon>
        <taxon>Chordata</taxon>
        <taxon>Craniata</taxon>
        <taxon>Vertebrata</taxon>
        <taxon>Euteleostomi</taxon>
        <taxon>Mammalia</taxon>
        <taxon>Eutheria</taxon>
        <taxon>Euarchontoglires</taxon>
        <taxon>Glires</taxon>
        <taxon>Rodentia</taxon>
        <taxon>Myomorpha</taxon>
        <taxon>Muroidea</taxon>
        <taxon>Muridae</taxon>
        <taxon>Murinae</taxon>
        <taxon>Mus</taxon>
        <taxon>Mus</taxon>
    </lineage>
</organism>
<accession>Q99NF2</accession>
<accession>A2AJ93</accession>
<accession>A2AJ94</accession>
<accession>Q8BPT0</accession>
<accession>Q8C9R5</accession>
<accession>Q9DBF4</accession>
<accession>Q9ERZ1</accession>
<dbReference type="EMBL" id="AF266508">
    <property type="protein sequence ID" value="AAF74501.2"/>
    <property type="molecule type" value="mRNA"/>
</dbReference>
<dbReference type="EMBL" id="AJ278902">
    <property type="protein sequence ID" value="CAC27332.1"/>
    <property type="molecule type" value="mRNA"/>
</dbReference>
<dbReference type="EMBL" id="AK004986">
    <property type="protein sequence ID" value="BAB23721.1"/>
    <property type="molecule type" value="mRNA"/>
</dbReference>
<dbReference type="EMBL" id="AK019560">
    <property type="protein sequence ID" value="BAC25597.1"/>
    <property type="molecule type" value="mRNA"/>
</dbReference>
<dbReference type="EMBL" id="AK041478">
    <property type="protein sequence ID" value="BAC30955.1"/>
    <property type="molecule type" value="mRNA"/>
</dbReference>
<dbReference type="EMBL" id="AK045384">
    <property type="protein sequence ID" value="BAC32338.1"/>
    <property type="molecule type" value="mRNA"/>
</dbReference>
<dbReference type="EMBL" id="AK053402">
    <property type="protein sequence ID" value="BAC35375.1"/>
    <property type="molecule type" value="mRNA"/>
</dbReference>
<dbReference type="EMBL" id="AL732585">
    <property type="status" value="NOT_ANNOTATED_CDS"/>
    <property type="molecule type" value="Genomic_DNA"/>
</dbReference>
<dbReference type="EMBL" id="BC006642">
    <property type="protein sequence ID" value="AAH06642.1"/>
    <property type="molecule type" value="mRNA"/>
</dbReference>
<dbReference type="CCDS" id="CCDS15745.1">
    <molecule id="Q99NF2-1"/>
</dbReference>
<dbReference type="CCDS" id="CCDS15746.1">
    <molecule id="Q99NF2-2"/>
</dbReference>
<dbReference type="CCDS" id="CCDS15747.1">
    <molecule id="Q99NF2-3"/>
</dbReference>
<dbReference type="RefSeq" id="NP_001034475.1">
    <molecule id="Q99NF2-1"/>
    <property type="nucleotide sequence ID" value="NM_001039386.2"/>
</dbReference>
<dbReference type="RefSeq" id="NP_001034476.1">
    <molecule id="Q99NF2-2"/>
    <property type="nucleotide sequence ID" value="NM_001039387.2"/>
</dbReference>
<dbReference type="RefSeq" id="NP_001171125.1">
    <property type="nucleotide sequence ID" value="NM_001177654.1"/>
</dbReference>
<dbReference type="RefSeq" id="NP_001171126.1">
    <property type="nucleotide sequence ID" value="NM_001177655.1"/>
</dbReference>
<dbReference type="RefSeq" id="NP_001408732.1">
    <molecule id="Q99NF2-5"/>
    <property type="nucleotide sequence ID" value="NM_001421803.1"/>
</dbReference>
<dbReference type="RefSeq" id="NP_064672.2">
    <molecule id="Q99NF2-3"/>
    <property type="nucleotide sequence ID" value="NM_020276.3"/>
</dbReference>
<dbReference type="SMR" id="Q99NF2"/>
<dbReference type="FunCoup" id="Q99NF2">
    <property type="interactions" value="280"/>
</dbReference>
<dbReference type="IntAct" id="Q99NF2">
    <property type="interactions" value="3"/>
</dbReference>
<dbReference type="STRING" id="10090.ENSMUSP00000097908"/>
<dbReference type="GlyGen" id="Q99NF2">
    <property type="glycosylation" value="1 site, 1 N-linked glycan (1 site)"/>
</dbReference>
<dbReference type="iPTMnet" id="Q99NF2"/>
<dbReference type="PhosphoSitePlus" id="Q99NF2"/>
<dbReference type="PaxDb" id="10090-ENSMUSP00000097908"/>
<dbReference type="ProteomicsDB" id="293985">
    <molecule id="Q99NF2-1"/>
</dbReference>
<dbReference type="ProteomicsDB" id="293986">
    <molecule id="Q99NF2-2"/>
</dbReference>
<dbReference type="ProteomicsDB" id="293987">
    <molecule id="Q99NF2-3"/>
</dbReference>
<dbReference type="ProteomicsDB" id="293988">
    <molecule id="Q99NF2-4"/>
</dbReference>
<dbReference type="ProteomicsDB" id="293989">
    <molecule id="Q99NF2-5"/>
</dbReference>
<dbReference type="Antibodypedia" id="32451">
    <property type="antibodies" value="171 antibodies from 28 providers"/>
</dbReference>
<dbReference type="DNASU" id="56876"/>
<dbReference type="Ensembl" id="ENSMUST00000006646.15">
    <molecule id="Q99NF2-2"/>
    <property type="protein sequence ID" value="ENSMUSP00000006646.9"/>
    <property type="gene ID" value="ENSMUSG00000006476.20"/>
</dbReference>
<dbReference type="Ensembl" id="ENSMUST00000100334.11">
    <molecule id="Q99NF2-1"/>
    <property type="protein sequence ID" value="ENSMUSP00000097908.5"/>
    <property type="gene ID" value="ENSMUSG00000006476.20"/>
</dbReference>
<dbReference type="Ensembl" id="ENSMUST00000102931.11">
    <molecule id="Q99NF2-3"/>
    <property type="protein sequence ID" value="ENSMUSP00000099995.5"/>
    <property type="gene ID" value="ENSMUSG00000006476.20"/>
</dbReference>
<dbReference type="GeneID" id="56876"/>
<dbReference type="KEGG" id="mmu:56876"/>
<dbReference type="UCSC" id="uc008iqa.1">
    <molecule id="Q99NF2-5"/>
    <property type="organism name" value="mouse"/>
</dbReference>
<dbReference type="UCSC" id="uc008iqb.1">
    <molecule id="Q99NF2-1"/>
    <property type="organism name" value="mouse"/>
</dbReference>
<dbReference type="UCSC" id="uc008iqc.1">
    <molecule id="Q99NF2-2"/>
    <property type="organism name" value="mouse"/>
</dbReference>
<dbReference type="UCSC" id="uc008iqd.1">
    <molecule id="Q99NF2-3"/>
    <property type="organism name" value="mouse"/>
</dbReference>
<dbReference type="AGR" id="MGI:1861755"/>
<dbReference type="CTD" id="26012"/>
<dbReference type="MGI" id="MGI:1861755">
    <property type="gene designation" value="Nsmf"/>
</dbReference>
<dbReference type="VEuPathDB" id="HostDB:ENSMUSG00000006476"/>
<dbReference type="eggNOG" id="ENOG502QRME">
    <property type="taxonomic scope" value="Eukaryota"/>
</dbReference>
<dbReference type="GeneTree" id="ENSGT00390000000459"/>
<dbReference type="HOGENOM" id="CLU_038476_2_0_1"/>
<dbReference type="InParanoid" id="Q99NF2"/>
<dbReference type="OMA" id="GRPCKSW"/>
<dbReference type="OrthoDB" id="6161298at2759"/>
<dbReference type="PhylomeDB" id="Q99NF2"/>
<dbReference type="TreeFam" id="TF331286"/>
<dbReference type="BioGRID-ORCS" id="56876">
    <property type="hits" value="5 hits in 78 CRISPR screens"/>
</dbReference>
<dbReference type="CD-CODE" id="CE726F99">
    <property type="entry name" value="Postsynaptic density"/>
</dbReference>
<dbReference type="ChiTaRS" id="Nsmf">
    <property type="organism name" value="mouse"/>
</dbReference>
<dbReference type="PRO" id="PR:Q99NF2"/>
<dbReference type="Proteomes" id="UP000000589">
    <property type="component" value="Chromosome 2"/>
</dbReference>
<dbReference type="RNAct" id="Q99NF2">
    <property type="molecule type" value="protein"/>
</dbReference>
<dbReference type="Bgee" id="ENSMUSG00000006476">
    <property type="expression patterns" value="Expressed in medial dorsal nucleus of thalamus and 244 other cell types or tissues"/>
</dbReference>
<dbReference type="ExpressionAtlas" id="Q99NF2">
    <property type="expression patterns" value="baseline and differential"/>
</dbReference>
<dbReference type="GO" id="GO:0097440">
    <property type="term" value="C:apical dendrite"/>
    <property type="evidence" value="ECO:0000250"/>
    <property type="project" value="UniProtKB"/>
</dbReference>
<dbReference type="GO" id="GO:0030863">
    <property type="term" value="C:cortical cytoskeleton"/>
    <property type="evidence" value="ECO:0000250"/>
    <property type="project" value="UniProtKB"/>
</dbReference>
<dbReference type="GO" id="GO:0005737">
    <property type="term" value="C:cytoplasm"/>
    <property type="evidence" value="ECO:0000314"/>
    <property type="project" value="UniProtKB"/>
</dbReference>
<dbReference type="GO" id="GO:0030425">
    <property type="term" value="C:dendrite"/>
    <property type="evidence" value="ECO:0000250"/>
    <property type="project" value="UniProtKB"/>
</dbReference>
<dbReference type="GO" id="GO:0000791">
    <property type="term" value="C:euchromatin"/>
    <property type="evidence" value="ECO:0000250"/>
    <property type="project" value="UniProtKB"/>
</dbReference>
<dbReference type="GO" id="GO:0016020">
    <property type="term" value="C:membrane"/>
    <property type="evidence" value="ECO:0000250"/>
    <property type="project" value="UniProtKB"/>
</dbReference>
<dbReference type="GO" id="GO:0043005">
    <property type="term" value="C:neuron projection"/>
    <property type="evidence" value="ECO:0000250"/>
    <property type="project" value="UniProtKB"/>
</dbReference>
<dbReference type="GO" id="GO:0005635">
    <property type="term" value="C:nuclear envelope"/>
    <property type="evidence" value="ECO:0000250"/>
    <property type="project" value="UniProtKB"/>
</dbReference>
<dbReference type="GO" id="GO:0016363">
    <property type="term" value="C:nuclear matrix"/>
    <property type="evidence" value="ECO:0000250"/>
    <property type="project" value="UniProtKB"/>
</dbReference>
<dbReference type="GO" id="GO:0031965">
    <property type="term" value="C:nuclear membrane"/>
    <property type="evidence" value="ECO:0000250"/>
    <property type="project" value="UniProtKB"/>
</dbReference>
<dbReference type="GO" id="GO:0005654">
    <property type="term" value="C:nucleoplasm"/>
    <property type="evidence" value="ECO:0007669"/>
    <property type="project" value="Ensembl"/>
</dbReference>
<dbReference type="GO" id="GO:0005634">
    <property type="term" value="C:nucleus"/>
    <property type="evidence" value="ECO:0000314"/>
    <property type="project" value="UniProtKB"/>
</dbReference>
<dbReference type="GO" id="GO:0043204">
    <property type="term" value="C:perikaryon"/>
    <property type="evidence" value="ECO:0000250"/>
    <property type="project" value="UniProtKB"/>
</dbReference>
<dbReference type="GO" id="GO:0005886">
    <property type="term" value="C:plasma membrane"/>
    <property type="evidence" value="ECO:0007669"/>
    <property type="project" value="UniProtKB-SubCell"/>
</dbReference>
<dbReference type="GO" id="GO:0014069">
    <property type="term" value="C:postsynaptic density"/>
    <property type="evidence" value="ECO:0000250"/>
    <property type="project" value="UniProtKB"/>
</dbReference>
<dbReference type="GO" id="GO:0045202">
    <property type="term" value="C:synapse"/>
    <property type="evidence" value="ECO:0000250"/>
    <property type="project" value="UniProtKB"/>
</dbReference>
<dbReference type="GO" id="GO:0048306">
    <property type="term" value="F:calcium-dependent protein binding"/>
    <property type="evidence" value="ECO:0000250"/>
    <property type="project" value="UniProtKB"/>
</dbReference>
<dbReference type="GO" id="GO:0071230">
    <property type="term" value="P:cellular response to amino acid stimulus"/>
    <property type="evidence" value="ECO:0000250"/>
    <property type="project" value="UniProtKB"/>
</dbReference>
<dbReference type="GO" id="GO:0071257">
    <property type="term" value="P:cellular response to electrical stimulus"/>
    <property type="evidence" value="ECO:0000250"/>
    <property type="project" value="UniProtKB"/>
</dbReference>
<dbReference type="GO" id="GO:0071371">
    <property type="term" value="P:cellular response to gonadotropin stimulus"/>
    <property type="evidence" value="ECO:0000314"/>
    <property type="project" value="UniProtKB"/>
</dbReference>
<dbReference type="GO" id="GO:2001224">
    <property type="term" value="P:positive regulation of neuron migration"/>
    <property type="evidence" value="ECO:0000250"/>
    <property type="project" value="UniProtKB"/>
</dbReference>
<dbReference type="GO" id="GO:0048814">
    <property type="term" value="P:regulation of dendrite morphogenesis"/>
    <property type="evidence" value="ECO:0000250"/>
    <property type="project" value="UniProtKB"/>
</dbReference>
<dbReference type="GO" id="GO:0043523">
    <property type="term" value="P:regulation of neuron apoptotic process"/>
    <property type="evidence" value="ECO:0000250"/>
    <property type="project" value="UniProtKB"/>
</dbReference>
<dbReference type="GO" id="GO:0048168">
    <property type="term" value="P:regulation of neuronal synaptic plasticity"/>
    <property type="evidence" value="ECO:0000250"/>
    <property type="project" value="UniProtKB"/>
</dbReference>
<dbReference type="Gene3D" id="1.20.5.1190">
    <property type="entry name" value="iswi atpase"/>
    <property type="match status" value="1"/>
</dbReference>
<dbReference type="InterPro" id="IPR033374">
    <property type="entry name" value="NSMF"/>
</dbReference>
<dbReference type="PANTHER" id="PTHR32061">
    <property type="entry name" value="NMDA RECEPTOR SYNAPTONUCLEAR SIGNALING AND NEURONAL MIGRATION FACTOR"/>
    <property type="match status" value="1"/>
</dbReference>
<keyword id="KW-0025">Alternative splicing</keyword>
<keyword id="KW-1003">Cell membrane</keyword>
<keyword id="KW-0966">Cell projection</keyword>
<keyword id="KW-0963">Cytoplasm</keyword>
<keyword id="KW-0206">Cytoskeleton</keyword>
<keyword id="KW-0449">Lipoprotein</keyword>
<keyword id="KW-0472">Membrane</keyword>
<keyword id="KW-0519">Myristate</keyword>
<keyword id="KW-0539">Nucleus</keyword>
<keyword id="KW-0597">Phosphoprotein</keyword>
<keyword id="KW-1185">Reference proteome</keyword>
<keyword id="KW-0770">Synapse</keyword>
<keyword id="KW-0771">Synaptosome</keyword>
<feature type="initiator methionine" description="Removed">
    <location>
        <position position="1"/>
    </location>
</feature>
<feature type="chain" id="PRO_0000096779" description="NMDA receptor synaptonuclear signaling and neuronal migration factor">
    <location>
        <begin position="2"/>
        <end position="532"/>
    </location>
</feature>
<feature type="region of interest" description="Necessary and sufficient to elicit dendritic processes and synaptic contacts" evidence="1">
    <location>
        <begin position="2"/>
        <end position="235"/>
    </location>
</feature>
<feature type="region of interest" description="Disordered" evidence="3">
    <location>
        <begin position="34"/>
        <end position="67"/>
    </location>
</feature>
<feature type="region of interest" description="Disordered" evidence="3">
    <location>
        <begin position="127"/>
        <end position="174"/>
    </location>
</feature>
<feature type="region of interest" description="Disordered" evidence="3">
    <location>
        <begin position="275"/>
        <end position="315"/>
    </location>
</feature>
<feature type="short sequence motif" description="Nuclear localization signal" evidence="1">
    <location>
        <begin position="249"/>
        <end position="252"/>
    </location>
</feature>
<feature type="compositionally biased region" description="Basic and acidic residues" evidence="3">
    <location>
        <begin position="38"/>
        <end position="48"/>
    </location>
</feature>
<feature type="compositionally biased region" description="Basic residues" evidence="3">
    <location>
        <begin position="127"/>
        <end position="139"/>
    </location>
</feature>
<feature type="compositionally biased region" description="Polar residues" evidence="3">
    <location>
        <begin position="155"/>
        <end position="164"/>
    </location>
</feature>
<feature type="compositionally biased region" description="Basic and acidic residues" evidence="3">
    <location>
        <begin position="302"/>
        <end position="311"/>
    </location>
</feature>
<feature type="modified residue" description="Phosphoserine" evidence="11">
    <location>
        <position position="206"/>
    </location>
</feature>
<feature type="modified residue" description="Phosphoserine" evidence="2">
    <location>
        <position position="292"/>
    </location>
</feature>
<feature type="modified residue" description="Phosphoserine" evidence="2">
    <location>
        <position position="294"/>
    </location>
</feature>
<feature type="lipid moiety-binding region" description="N-myristoyl glycine" evidence="1">
    <location>
        <position position="2"/>
    </location>
</feature>
<feature type="splice variant" id="VSP_014764" description="In isoform 4." evidence="9">
    <original>M</original>
    <variation>MRGAPVTM</variation>
    <location>
        <position position="1"/>
    </location>
</feature>
<feature type="splice variant" id="VSP_014765" description="In isoform 5." evidence="9">
    <original>DDVPIRTWFPKENLF</original>
    <variation>GEGLIFGPGQIPAGL</variation>
    <location>
        <begin position="212"/>
        <end position="226"/>
    </location>
</feature>
<feature type="splice variant" id="VSP_014766" description="In isoform 5." evidence="9">
    <location>
        <begin position="227"/>
        <end position="532"/>
    </location>
</feature>
<feature type="splice variant" id="VSP_014767" description="In isoform 2 and isoform 4." evidence="8 9">
    <location>
        <begin position="238"/>
        <end position="239"/>
    </location>
</feature>
<feature type="splice variant" id="VSP_014768" description="In isoform 3." evidence="7">
    <location>
        <begin position="240"/>
        <end position="262"/>
    </location>
</feature>
<feature type="splice variant" id="VSP_014769" description="In isoform 4." evidence="9">
    <location>
        <begin position="280"/>
        <end position="309"/>
    </location>
</feature>
<feature type="sequence conflict" description="In Ref. 3; BAC35375." evidence="10" ref="3">
    <original>K</original>
    <variation>N</variation>
    <location>
        <position position="248"/>
    </location>
</feature>
<evidence type="ECO:0000250" key="1"/>
<evidence type="ECO:0000250" key="2">
    <source>
        <dbReference type="UniProtKB" id="Q9EPI6"/>
    </source>
</evidence>
<evidence type="ECO:0000256" key="3">
    <source>
        <dbReference type="SAM" id="MobiDB-lite"/>
    </source>
</evidence>
<evidence type="ECO:0000269" key="4">
    <source>
    </source>
</evidence>
<evidence type="ECO:0000269" key="5">
    <source>
    </source>
</evidence>
<evidence type="ECO:0000269" key="6">
    <source>
    </source>
</evidence>
<evidence type="ECO:0000303" key="7">
    <source>
    </source>
</evidence>
<evidence type="ECO:0000303" key="8">
    <source>
    </source>
</evidence>
<evidence type="ECO:0000303" key="9">
    <source>
    </source>
</evidence>
<evidence type="ECO:0000305" key="10"/>
<evidence type="ECO:0007744" key="11">
    <source>
    </source>
</evidence>
<sequence length="532" mass="60293">MGAAASRRRALRSEAMSSVAAKVRAARAFGEYLSQSHPENRNGADHLLADAYSGHDGSPEMQPAPQNKRRLSLVSNGRYEGSISDEAVSGKPAIEGPQPHVYTISREPALLPGSEAEAIELAVVKGRRQRERHPHHHSQPLRASPGSSREDISRPCQSWAGSRQGSKECPGCAQLVPGPSSRAFGLEQPPLPEAPGRHKKLERMYSVDGVSDDVPIRTWFPKENLFSFQTATTTMQAISVFRGYAERKRRKRENDSASVIQRNFRKHLRMVGSRRVKAQTFAERRERSFSRSWSDPTPMKADTSHDSRDSSDLQSSHCTLDEACEDLDWDTEKGLEAMACNTEGFLPPKVMLISSKVPKAEYIPTIIRRDDPSIIPILYDHEHATFEDILEEIEKKLNIYHKGAKIWKMLIFCQGGPGHLYLLKNKVATFAKVEKEEDMIHFWKRLSRLMSKVNPEPNVIHIMGCYILGNPNGEKLFQNLRTLMTPYKVTFESPLELSAQGKQMIETYFDFRLYRLWKSRQHSKLLDFDDVL</sequence>
<reference key="1">
    <citation type="journal article" date="2000" name="Genes Dev.">
        <title>Novel gene expressed in nasal region influences outgrowth of olfactory axons and migration of luteinizing hormone-releasing hormone (LHRH) neurons.</title>
        <authorList>
            <person name="Kramer P.R."/>
            <person name="Wray S."/>
        </authorList>
    </citation>
    <scope>NUCLEOTIDE SEQUENCE [MRNA] (ISOFORM 3)</scope>
    <scope>FUNCTION</scope>
    <scope>TISSUE SPECIFICITY</scope>
    <scope>SUBCELLULAR LOCATION</scope>
    <scope>DEVELOPMENTAL STAGE</scope>
    <source>
        <strain>NIH Swiss</strain>
    </source>
</reference>
<reference key="2">
    <citation type="submission" date="2000-08" db="EMBL/GenBank/DDBJ databases">
        <title>Characterization of the novel brain-specific protein Jacob.</title>
        <authorList>
            <person name="Dieterich D.C."/>
            <person name="Hoffmann B."/>
            <person name="Seidenbecher C.I."/>
            <person name="Kreutz M.R."/>
        </authorList>
    </citation>
    <scope>NUCLEOTIDE SEQUENCE [MRNA] (ISOFORM 1)</scope>
    <source>
        <tissue>Brain</tissue>
    </source>
</reference>
<reference key="3">
    <citation type="journal article" date="2005" name="Science">
        <title>The transcriptional landscape of the mammalian genome.</title>
        <authorList>
            <person name="Carninci P."/>
            <person name="Kasukawa T."/>
            <person name="Katayama S."/>
            <person name="Gough J."/>
            <person name="Frith M.C."/>
            <person name="Maeda N."/>
            <person name="Oyama R."/>
            <person name="Ravasi T."/>
            <person name="Lenhard B."/>
            <person name="Wells C."/>
            <person name="Kodzius R."/>
            <person name="Shimokawa K."/>
            <person name="Bajic V.B."/>
            <person name="Brenner S.E."/>
            <person name="Batalov S."/>
            <person name="Forrest A.R."/>
            <person name="Zavolan M."/>
            <person name="Davis M.J."/>
            <person name="Wilming L.G."/>
            <person name="Aidinis V."/>
            <person name="Allen J.E."/>
            <person name="Ambesi-Impiombato A."/>
            <person name="Apweiler R."/>
            <person name="Aturaliya R.N."/>
            <person name="Bailey T.L."/>
            <person name="Bansal M."/>
            <person name="Baxter L."/>
            <person name="Beisel K.W."/>
            <person name="Bersano T."/>
            <person name="Bono H."/>
            <person name="Chalk A.M."/>
            <person name="Chiu K.P."/>
            <person name="Choudhary V."/>
            <person name="Christoffels A."/>
            <person name="Clutterbuck D.R."/>
            <person name="Crowe M.L."/>
            <person name="Dalla E."/>
            <person name="Dalrymple B.P."/>
            <person name="de Bono B."/>
            <person name="Della Gatta G."/>
            <person name="di Bernardo D."/>
            <person name="Down T."/>
            <person name="Engstrom P."/>
            <person name="Fagiolini M."/>
            <person name="Faulkner G."/>
            <person name="Fletcher C.F."/>
            <person name="Fukushima T."/>
            <person name="Furuno M."/>
            <person name="Futaki S."/>
            <person name="Gariboldi M."/>
            <person name="Georgii-Hemming P."/>
            <person name="Gingeras T.R."/>
            <person name="Gojobori T."/>
            <person name="Green R.E."/>
            <person name="Gustincich S."/>
            <person name="Harbers M."/>
            <person name="Hayashi Y."/>
            <person name="Hensch T.K."/>
            <person name="Hirokawa N."/>
            <person name="Hill D."/>
            <person name="Huminiecki L."/>
            <person name="Iacono M."/>
            <person name="Ikeo K."/>
            <person name="Iwama A."/>
            <person name="Ishikawa T."/>
            <person name="Jakt M."/>
            <person name="Kanapin A."/>
            <person name="Katoh M."/>
            <person name="Kawasawa Y."/>
            <person name="Kelso J."/>
            <person name="Kitamura H."/>
            <person name="Kitano H."/>
            <person name="Kollias G."/>
            <person name="Krishnan S.P."/>
            <person name="Kruger A."/>
            <person name="Kummerfeld S.K."/>
            <person name="Kurochkin I.V."/>
            <person name="Lareau L.F."/>
            <person name="Lazarevic D."/>
            <person name="Lipovich L."/>
            <person name="Liu J."/>
            <person name="Liuni S."/>
            <person name="McWilliam S."/>
            <person name="Madan Babu M."/>
            <person name="Madera M."/>
            <person name="Marchionni L."/>
            <person name="Matsuda H."/>
            <person name="Matsuzawa S."/>
            <person name="Miki H."/>
            <person name="Mignone F."/>
            <person name="Miyake S."/>
            <person name="Morris K."/>
            <person name="Mottagui-Tabar S."/>
            <person name="Mulder N."/>
            <person name="Nakano N."/>
            <person name="Nakauchi H."/>
            <person name="Ng P."/>
            <person name="Nilsson R."/>
            <person name="Nishiguchi S."/>
            <person name="Nishikawa S."/>
            <person name="Nori F."/>
            <person name="Ohara O."/>
            <person name="Okazaki Y."/>
            <person name="Orlando V."/>
            <person name="Pang K.C."/>
            <person name="Pavan W.J."/>
            <person name="Pavesi G."/>
            <person name="Pesole G."/>
            <person name="Petrovsky N."/>
            <person name="Piazza S."/>
            <person name="Reed J."/>
            <person name="Reid J.F."/>
            <person name="Ring B.Z."/>
            <person name="Ringwald M."/>
            <person name="Rost B."/>
            <person name="Ruan Y."/>
            <person name="Salzberg S.L."/>
            <person name="Sandelin A."/>
            <person name="Schneider C."/>
            <person name="Schoenbach C."/>
            <person name="Sekiguchi K."/>
            <person name="Semple C.A."/>
            <person name="Seno S."/>
            <person name="Sessa L."/>
            <person name="Sheng Y."/>
            <person name="Shibata Y."/>
            <person name="Shimada H."/>
            <person name="Shimada K."/>
            <person name="Silva D."/>
            <person name="Sinclair B."/>
            <person name="Sperling S."/>
            <person name="Stupka E."/>
            <person name="Sugiura K."/>
            <person name="Sultana R."/>
            <person name="Takenaka Y."/>
            <person name="Taki K."/>
            <person name="Tammoja K."/>
            <person name="Tan S.L."/>
            <person name="Tang S."/>
            <person name="Taylor M.S."/>
            <person name="Tegner J."/>
            <person name="Teichmann S.A."/>
            <person name="Ueda H.R."/>
            <person name="van Nimwegen E."/>
            <person name="Verardo R."/>
            <person name="Wei C.L."/>
            <person name="Yagi K."/>
            <person name="Yamanishi H."/>
            <person name="Zabarovsky E."/>
            <person name="Zhu S."/>
            <person name="Zimmer A."/>
            <person name="Hide W."/>
            <person name="Bult C."/>
            <person name="Grimmond S.M."/>
            <person name="Teasdale R.D."/>
            <person name="Liu E.T."/>
            <person name="Brusic V."/>
            <person name="Quackenbush J."/>
            <person name="Wahlestedt C."/>
            <person name="Mattick J.S."/>
            <person name="Hume D.A."/>
            <person name="Kai C."/>
            <person name="Sasaki D."/>
            <person name="Tomaru Y."/>
            <person name="Fukuda S."/>
            <person name="Kanamori-Katayama M."/>
            <person name="Suzuki M."/>
            <person name="Aoki J."/>
            <person name="Arakawa T."/>
            <person name="Iida J."/>
            <person name="Imamura K."/>
            <person name="Itoh M."/>
            <person name="Kato T."/>
            <person name="Kawaji H."/>
            <person name="Kawagashira N."/>
            <person name="Kawashima T."/>
            <person name="Kojima M."/>
            <person name="Kondo S."/>
            <person name="Konno H."/>
            <person name="Nakano K."/>
            <person name="Ninomiya N."/>
            <person name="Nishio T."/>
            <person name="Okada M."/>
            <person name="Plessy C."/>
            <person name="Shibata K."/>
            <person name="Shiraki T."/>
            <person name="Suzuki S."/>
            <person name="Tagami M."/>
            <person name="Waki K."/>
            <person name="Watahiki A."/>
            <person name="Okamura-Oho Y."/>
            <person name="Suzuki H."/>
            <person name="Kawai J."/>
            <person name="Hayashizaki Y."/>
        </authorList>
    </citation>
    <scope>NUCLEOTIDE SEQUENCE [LARGE SCALE MRNA] (ISOFORMS 1; 2; 4 AND 5)</scope>
    <source>
        <strain>C57BL/6J</strain>
        <tissue>Corpora quadrigemina</tissue>
        <tissue>Testis</tissue>
    </source>
</reference>
<reference key="4">
    <citation type="journal article" date="2009" name="PLoS Biol.">
        <title>Lineage-specific biology revealed by a finished genome assembly of the mouse.</title>
        <authorList>
            <person name="Church D.M."/>
            <person name="Goodstadt L."/>
            <person name="Hillier L.W."/>
            <person name="Zody M.C."/>
            <person name="Goldstein S."/>
            <person name="She X."/>
            <person name="Bult C.J."/>
            <person name="Agarwala R."/>
            <person name="Cherry J.L."/>
            <person name="DiCuccio M."/>
            <person name="Hlavina W."/>
            <person name="Kapustin Y."/>
            <person name="Meric P."/>
            <person name="Maglott D."/>
            <person name="Birtle Z."/>
            <person name="Marques A.C."/>
            <person name="Graves T."/>
            <person name="Zhou S."/>
            <person name="Teague B."/>
            <person name="Potamousis K."/>
            <person name="Churas C."/>
            <person name="Place M."/>
            <person name="Herschleb J."/>
            <person name="Runnheim R."/>
            <person name="Forrest D."/>
            <person name="Amos-Landgraf J."/>
            <person name="Schwartz D.C."/>
            <person name="Cheng Z."/>
            <person name="Lindblad-Toh K."/>
            <person name="Eichler E.E."/>
            <person name="Ponting C.P."/>
        </authorList>
    </citation>
    <scope>NUCLEOTIDE SEQUENCE [LARGE SCALE GENOMIC DNA]</scope>
    <source>
        <strain>C57BL/6J</strain>
    </source>
</reference>
<reference key="5">
    <citation type="journal article" date="2004" name="Genome Res.">
        <title>The status, quality, and expansion of the NIH full-length cDNA project: the Mammalian Gene Collection (MGC).</title>
        <authorList>
            <consortium name="The MGC Project Team"/>
        </authorList>
    </citation>
    <scope>NUCLEOTIDE SEQUENCE [LARGE SCALE MRNA] (ISOFORM 2)</scope>
    <source>
        <strain>C57BL/6J</strain>
        <strain>FVB/N</strain>
        <tissue>Mammary tumor</tissue>
    </source>
</reference>
<reference key="6">
    <citation type="journal article" date="2001" name="Gene Expr. Patterns">
        <title>Nasal embryonic LHRH factor (NELF) expression within the CNS and PNS of the rodent.</title>
        <authorList>
            <person name="Kramer P.R."/>
            <person name="Wray S."/>
        </authorList>
    </citation>
    <scope>TISSUE SPECIFICITY</scope>
</reference>
<reference key="7">
    <citation type="journal article" date="2010" name="Cell">
        <title>A tissue-specific atlas of mouse protein phosphorylation and expression.</title>
        <authorList>
            <person name="Huttlin E.L."/>
            <person name="Jedrychowski M.P."/>
            <person name="Elias J.E."/>
            <person name="Goswami T."/>
            <person name="Rad R."/>
            <person name="Beausoleil S.A."/>
            <person name="Villen J."/>
            <person name="Haas W."/>
            <person name="Sowa M.E."/>
            <person name="Gygi S.P."/>
        </authorList>
    </citation>
    <scope>PHOSPHORYLATION [LARGE SCALE ANALYSIS] AT SER-206</scope>
    <scope>IDENTIFICATION BY MASS SPECTROMETRY [LARGE SCALE ANALYSIS]</scope>
    <source>
        <tissue>Brain</tissue>
    </source>
</reference>
<reference key="8">
    <citation type="journal article" date="2010" name="Mol. Cell. Endocrinol.">
        <title>NELF is a nuclear protein involved in hypothalamic GnRH neuronal migration.</title>
        <authorList>
            <person name="Xu N."/>
            <person name="Bhagavath B."/>
            <person name="Kim H.G."/>
            <person name="Halvorson L."/>
            <person name="Podolsky R.S."/>
            <person name="Chorich L.P."/>
            <person name="Prasad P."/>
            <person name="Xiong W.C."/>
            <person name="Cameron R.S."/>
            <person name="Layman L.C."/>
        </authorList>
    </citation>
    <scope>SUBCELLULAR LOCATION</scope>
    <scope>INDUCTION</scope>
    <scope>TISSUE SPECIFICITY</scope>
</reference>
<protein>
    <recommendedName>
        <fullName>NMDA receptor synaptonuclear signaling and neuronal migration factor</fullName>
    </recommendedName>
    <alternativeName>
        <fullName>Juxtasynaptic attractor of caldendrin on dendritic boutons protein</fullName>
        <shortName>Jacob protein</shortName>
    </alternativeName>
    <alternativeName>
        <fullName>Nasal embryonic luteinizing hormone-releasing hormone factor</fullName>
        <shortName>Nasal embryonic LHRH factor</shortName>
    </alternativeName>
</protein>
<proteinExistence type="evidence at protein level"/>